<feature type="chain" id="PRO_0000088335" description="3-phosphoshikimate 1-carboxyvinyltransferase">
    <location>
        <begin position="1"/>
        <end position="406"/>
    </location>
</feature>
<feature type="active site" description="Proton acceptor" evidence="1">
    <location>
        <position position="295"/>
    </location>
</feature>
<feature type="binding site" evidence="1">
    <location>
        <position position="20"/>
    </location>
    <ligand>
        <name>3-phosphoshikimate</name>
        <dbReference type="ChEBI" id="CHEBI:145989"/>
    </ligand>
</feature>
<feature type="binding site" evidence="1">
    <location>
        <position position="20"/>
    </location>
    <ligand>
        <name>phosphoenolpyruvate</name>
        <dbReference type="ChEBI" id="CHEBI:58702"/>
    </ligand>
</feature>
<feature type="binding site" evidence="1">
    <location>
        <position position="21"/>
    </location>
    <ligand>
        <name>3-phosphoshikimate</name>
        <dbReference type="ChEBI" id="CHEBI:145989"/>
    </ligand>
</feature>
<feature type="binding site" evidence="1">
    <location>
        <position position="25"/>
    </location>
    <ligand>
        <name>3-phosphoshikimate</name>
        <dbReference type="ChEBI" id="CHEBI:145989"/>
    </ligand>
</feature>
<feature type="binding site" evidence="1">
    <location>
        <position position="84"/>
    </location>
    <ligand>
        <name>phosphoenolpyruvate</name>
        <dbReference type="ChEBI" id="CHEBI:58702"/>
    </ligand>
</feature>
<feature type="binding site" evidence="1">
    <location>
        <position position="112"/>
    </location>
    <ligand>
        <name>phosphoenolpyruvate</name>
        <dbReference type="ChEBI" id="CHEBI:58702"/>
    </ligand>
</feature>
<feature type="binding site" evidence="1">
    <location>
        <position position="155"/>
    </location>
    <ligand>
        <name>3-phosphoshikimate</name>
        <dbReference type="ChEBI" id="CHEBI:145989"/>
    </ligand>
</feature>
<feature type="binding site" evidence="1">
    <location>
        <position position="156"/>
    </location>
    <ligand>
        <name>3-phosphoshikimate</name>
        <dbReference type="ChEBI" id="CHEBI:145989"/>
    </ligand>
</feature>
<feature type="binding site" evidence="1">
    <location>
        <position position="157"/>
    </location>
    <ligand>
        <name>3-phosphoshikimate</name>
        <dbReference type="ChEBI" id="CHEBI:145989"/>
    </ligand>
</feature>
<feature type="binding site" evidence="1">
    <location>
        <position position="157"/>
    </location>
    <ligand>
        <name>phosphoenolpyruvate</name>
        <dbReference type="ChEBI" id="CHEBI:58702"/>
    </ligand>
</feature>
<feature type="binding site" evidence="1">
    <location>
        <position position="295"/>
    </location>
    <ligand>
        <name>3-phosphoshikimate</name>
        <dbReference type="ChEBI" id="CHEBI:145989"/>
    </ligand>
</feature>
<feature type="binding site" evidence="1">
    <location>
        <position position="317"/>
    </location>
    <ligand>
        <name>3-phosphoshikimate</name>
        <dbReference type="ChEBI" id="CHEBI:145989"/>
    </ligand>
</feature>
<feature type="binding site" evidence="1">
    <location>
        <position position="321"/>
    </location>
    <ligand>
        <name>3-phosphoshikimate</name>
        <dbReference type="ChEBI" id="CHEBI:145989"/>
    </ligand>
</feature>
<feature type="binding site" evidence="1">
    <location>
        <position position="325"/>
    </location>
    <ligand>
        <name>phosphoenolpyruvate</name>
        <dbReference type="ChEBI" id="CHEBI:58702"/>
    </ligand>
</feature>
<feature type="binding site" evidence="1">
    <location>
        <position position="366"/>
    </location>
    <ligand>
        <name>phosphoenolpyruvate</name>
        <dbReference type="ChEBI" id="CHEBI:58702"/>
    </ligand>
</feature>
<feature type="binding site" evidence="1">
    <location>
        <position position="392"/>
    </location>
    <ligand>
        <name>phosphoenolpyruvate</name>
        <dbReference type="ChEBI" id="CHEBI:58702"/>
    </ligand>
</feature>
<dbReference type="EC" id="2.5.1.19" evidence="1"/>
<dbReference type="EMBL" id="AE009950">
    <property type="protein sequence ID" value="AAL81823.1"/>
    <property type="status" value="ALT_INIT"/>
    <property type="molecule type" value="Genomic_DNA"/>
</dbReference>
<dbReference type="SMR" id="Q8U0A0"/>
<dbReference type="STRING" id="186497.PF1699"/>
<dbReference type="PaxDb" id="186497-PF1699"/>
<dbReference type="KEGG" id="pfu:PF1699"/>
<dbReference type="PATRIC" id="fig|186497.12.peg.1767"/>
<dbReference type="eggNOG" id="arCOG04134">
    <property type="taxonomic scope" value="Archaea"/>
</dbReference>
<dbReference type="HOGENOM" id="CLU_024321_0_0_2"/>
<dbReference type="PhylomeDB" id="Q8U0A0"/>
<dbReference type="UniPathway" id="UPA00053"/>
<dbReference type="Proteomes" id="UP000001013">
    <property type="component" value="Chromosome"/>
</dbReference>
<dbReference type="GO" id="GO:0005737">
    <property type="term" value="C:cytoplasm"/>
    <property type="evidence" value="ECO:0007669"/>
    <property type="project" value="UniProtKB-SubCell"/>
</dbReference>
<dbReference type="GO" id="GO:0003866">
    <property type="term" value="F:3-phosphoshikimate 1-carboxyvinyltransferase activity"/>
    <property type="evidence" value="ECO:0007669"/>
    <property type="project" value="UniProtKB-UniRule"/>
</dbReference>
<dbReference type="GO" id="GO:0008652">
    <property type="term" value="P:amino acid biosynthetic process"/>
    <property type="evidence" value="ECO:0007669"/>
    <property type="project" value="UniProtKB-KW"/>
</dbReference>
<dbReference type="GO" id="GO:0009073">
    <property type="term" value="P:aromatic amino acid family biosynthetic process"/>
    <property type="evidence" value="ECO:0007669"/>
    <property type="project" value="UniProtKB-KW"/>
</dbReference>
<dbReference type="GO" id="GO:0009423">
    <property type="term" value="P:chorismate biosynthetic process"/>
    <property type="evidence" value="ECO:0007669"/>
    <property type="project" value="UniProtKB-UniRule"/>
</dbReference>
<dbReference type="CDD" id="cd01556">
    <property type="entry name" value="EPSP_synthase"/>
    <property type="match status" value="1"/>
</dbReference>
<dbReference type="Gene3D" id="3.65.10.10">
    <property type="entry name" value="Enolpyruvate transferase domain"/>
    <property type="match status" value="2"/>
</dbReference>
<dbReference type="HAMAP" id="MF_00210">
    <property type="entry name" value="EPSP_synth"/>
    <property type="match status" value="1"/>
</dbReference>
<dbReference type="InterPro" id="IPR001986">
    <property type="entry name" value="Enolpyruvate_Tfrase_dom"/>
</dbReference>
<dbReference type="InterPro" id="IPR036968">
    <property type="entry name" value="Enolpyruvate_Tfrase_sf"/>
</dbReference>
<dbReference type="InterPro" id="IPR006264">
    <property type="entry name" value="EPSP_synthase"/>
</dbReference>
<dbReference type="InterPro" id="IPR023193">
    <property type="entry name" value="EPSP_synthase_CS"/>
</dbReference>
<dbReference type="InterPro" id="IPR013792">
    <property type="entry name" value="RNA3'P_cycl/enolpyr_Trfase_a/b"/>
</dbReference>
<dbReference type="NCBIfam" id="TIGR01356">
    <property type="entry name" value="aroA"/>
    <property type="match status" value="1"/>
</dbReference>
<dbReference type="PANTHER" id="PTHR21090">
    <property type="entry name" value="AROM/DEHYDROQUINATE SYNTHASE"/>
    <property type="match status" value="1"/>
</dbReference>
<dbReference type="PANTHER" id="PTHR21090:SF5">
    <property type="entry name" value="PENTAFUNCTIONAL AROM POLYPEPTIDE"/>
    <property type="match status" value="1"/>
</dbReference>
<dbReference type="Pfam" id="PF00275">
    <property type="entry name" value="EPSP_synthase"/>
    <property type="match status" value="1"/>
</dbReference>
<dbReference type="PIRSF" id="PIRSF000505">
    <property type="entry name" value="EPSPS"/>
    <property type="match status" value="1"/>
</dbReference>
<dbReference type="SUPFAM" id="SSF55205">
    <property type="entry name" value="EPT/RTPC-like"/>
    <property type="match status" value="1"/>
</dbReference>
<dbReference type="PROSITE" id="PS00885">
    <property type="entry name" value="EPSP_SYNTHASE_2"/>
    <property type="match status" value="1"/>
</dbReference>
<evidence type="ECO:0000255" key="1">
    <source>
        <dbReference type="HAMAP-Rule" id="MF_00210"/>
    </source>
</evidence>
<evidence type="ECO:0000305" key="2"/>
<keyword id="KW-0028">Amino-acid biosynthesis</keyword>
<keyword id="KW-0057">Aromatic amino acid biosynthesis</keyword>
<keyword id="KW-0963">Cytoplasm</keyword>
<keyword id="KW-1185">Reference proteome</keyword>
<keyword id="KW-0808">Transferase</keyword>
<accession>Q8U0A0</accession>
<reference key="1">
    <citation type="journal article" date="1999" name="Genetics">
        <title>Divergence of the hyperthermophilic archaea Pyrococcus furiosus and P. horikoshii inferred from complete genomic sequences.</title>
        <authorList>
            <person name="Maeder D.L."/>
            <person name="Weiss R.B."/>
            <person name="Dunn D.M."/>
            <person name="Cherry J.L."/>
            <person name="Gonzalez J.M."/>
            <person name="DiRuggiero J."/>
            <person name="Robb F.T."/>
        </authorList>
    </citation>
    <scope>NUCLEOTIDE SEQUENCE [LARGE SCALE GENOMIC DNA]</scope>
    <source>
        <strain>ATCC 43587 / DSM 3638 / JCM 8422 / Vc1</strain>
    </source>
</reference>
<organism>
    <name type="scientific">Pyrococcus furiosus (strain ATCC 43587 / DSM 3638 / JCM 8422 / Vc1)</name>
    <dbReference type="NCBI Taxonomy" id="186497"/>
    <lineage>
        <taxon>Archaea</taxon>
        <taxon>Methanobacteriati</taxon>
        <taxon>Methanobacteriota</taxon>
        <taxon>Thermococci</taxon>
        <taxon>Thermococcales</taxon>
        <taxon>Thermococcaceae</taxon>
        <taxon>Pyrococcus</taxon>
    </lineage>
</organism>
<gene>
    <name evidence="1" type="primary">aroA</name>
    <name type="ordered locus">PF1699</name>
</gene>
<proteinExistence type="inferred from homology"/>
<sequence length="406" mass="45068">MLRIVPPKEIQGEVIAPPSKSYTHRGYFLSLLADEKSIVERPLISDDTLATIDAIRAFGADLIEEVVYPPEELRPNYIFARDSGTTARISIIVSSLAKGVSVIDGREQLRRRPMEDGVSSLRMIGVEAIGKRLPVKVFGRGRISAKEVSIVAEKSSQFATGFLILAAKIGLKVEIVKPVSKPYIEMTLKTMEEFGVKYDKAQENERLVIFVDPGVKGTKFKVPGDYSSAANFLVAGALYGKIRVRNLMRDDVQADKEILNILREYGAKVKVKDEYVEVESNERNPLNVDCSNFPDLFPLLAVLAAYAEGKSVIRGRQLRIKESDRIHAMAVNLSRAGIRVRELSDGLEIWGGQPKGFRGKTFNDHRITMALAILALGAKGESIIPETKSIAKSYPNFFEDLMRVIK</sequence>
<name>AROA_PYRFU</name>
<protein>
    <recommendedName>
        <fullName evidence="1">3-phosphoshikimate 1-carboxyvinyltransferase</fullName>
        <ecNumber evidence="1">2.5.1.19</ecNumber>
    </recommendedName>
    <alternativeName>
        <fullName evidence="1">5-enolpyruvylshikimate-3-phosphate synthase</fullName>
        <shortName evidence="1">EPSP synthase</shortName>
        <shortName evidence="1">EPSPS</shortName>
    </alternativeName>
</protein>
<comment type="function">
    <text evidence="1">Catalyzes the transfer of the enolpyruvyl moiety of phosphoenolpyruvate (PEP) to the 5-hydroxyl of shikimate-3-phosphate (S3P) to produce enolpyruvyl shikimate-3-phosphate and inorganic phosphate.</text>
</comment>
<comment type="catalytic activity">
    <reaction evidence="1">
        <text>3-phosphoshikimate + phosphoenolpyruvate = 5-O-(1-carboxyvinyl)-3-phosphoshikimate + phosphate</text>
        <dbReference type="Rhea" id="RHEA:21256"/>
        <dbReference type="ChEBI" id="CHEBI:43474"/>
        <dbReference type="ChEBI" id="CHEBI:57701"/>
        <dbReference type="ChEBI" id="CHEBI:58702"/>
        <dbReference type="ChEBI" id="CHEBI:145989"/>
        <dbReference type="EC" id="2.5.1.19"/>
    </reaction>
    <physiologicalReaction direction="left-to-right" evidence="1">
        <dbReference type="Rhea" id="RHEA:21257"/>
    </physiologicalReaction>
</comment>
<comment type="pathway">
    <text evidence="1">Metabolic intermediate biosynthesis; chorismate biosynthesis.</text>
</comment>
<comment type="subunit">
    <text evidence="1">Monomer.</text>
</comment>
<comment type="subcellular location">
    <subcellularLocation>
        <location evidence="1">Cytoplasm</location>
    </subcellularLocation>
</comment>
<comment type="similarity">
    <text evidence="1">Belongs to the EPSP synthase family.</text>
</comment>
<comment type="sequence caution" evidence="2">
    <conflict type="erroneous initiation">
        <sequence resource="EMBL-CDS" id="AAL81823"/>
    </conflict>
    <text>Extended N-terminus.</text>
</comment>